<feature type="initiator methionine" description="Removed" evidence="1">
    <location>
        <position position="1"/>
    </location>
</feature>
<feature type="chain" id="PRO_0000172434" description="Large ribosomal subunit protein bL32">
    <location>
        <begin position="2"/>
        <end position="56"/>
    </location>
</feature>
<feature type="region of interest" description="Disordered" evidence="2">
    <location>
        <begin position="1"/>
        <end position="26"/>
    </location>
</feature>
<feature type="compositionally biased region" description="Basic residues" evidence="2">
    <location>
        <begin position="7"/>
        <end position="16"/>
    </location>
</feature>
<proteinExistence type="inferred from homology"/>
<comment type="similarity">
    <text evidence="3">Belongs to the bacterial ribosomal protein bL32 family.</text>
</comment>
<keyword id="KW-0687">Ribonucleoprotein</keyword>
<keyword id="KW-0689">Ribosomal protein</keyword>
<accession>Q9RA36</accession>
<name>RL32_MORMI</name>
<sequence>MAVQKSKVTRSRRGQRRSHDALTAAATTVDVTSGETHLRHNVTADGYYKGVKVINK</sequence>
<dbReference type="EMBL" id="AB021978">
    <property type="protein sequence ID" value="BAA85253.1"/>
    <property type="molecule type" value="Genomic_DNA"/>
</dbReference>
<dbReference type="PIR" id="T44431">
    <property type="entry name" value="T44431"/>
</dbReference>
<dbReference type="RefSeq" id="WP_006033904.1">
    <property type="nucleotide sequence ID" value="NZ_CAXYEI010000004.1"/>
</dbReference>
<dbReference type="SMR" id="Q9RA36"/>
<dbReference type="GeneID" id="61297628"/>
<dbReference type="GO" id="GO:0015934">
    <property type="term" value="C:large ribosomal subunit"/>
    <property type="evidence" value="ECO:0007669"/>
    <property type="project" value="InterPro"/>
</dbReference>
<dbReference type="GO" id="GO:0003735">
    <property type="term" value="F:structural constituent of ribosome"/>
    <property type="evidence" value="ECO:0007669"/>
    <property type="project" value="InterPro"/>
</dbReference>
<dbReference type="GO" id="GO:0006412">
    <property type="term" value="P:translation"/>
    <property type="evidence" value="ECO:0007669"/>
    <property type="project" value="UniProtKB-UniRule"/>
</dbReference>
<dbReference type="HAMAP" id="MF_00340">
    <property type="entry name" value="Ribosomal_bL32"/>
    <property type="match status" value="1"/>
</dbReference>
<dbReference type="InterPro" id="IPR002677">
    <property type="entry name" value="Ribosomal_bL32"/>
</dbReference>
<dbReference type="InterPro" id="IPR044957">
    <property type="entry name" value="Ribosomal_bL32_bact"/>
</dbReference>
<dbReference type="InterPro" id="IPR011332">
    <property type="entry name" value="Ribosomal_zn-bd"/>
</dbReference>
<dbReference type="NCBIfam" id="TIGR01031">
    <property type="entry name" value="rpmF_bact"/>
    <property type="match status" value="1"/>
</dbReference>
<dbReference type="PANTHER" id="PTHR35534">
    <property type="entry name" value="50S RIBOSOMAL PROTEIN L32"/>
    <property type="match status" value="1"/>
</dbReference>
<dbReference type="PANTHER" id="PTHR35534:SF1">
    <property type="entry name" value="LARGE RIBOSOMAL SUBUNIT PROTEIN BL32"/>
    <property type="match status" value="1"/>
</dbReference>
<dbReference type="Pfam" id="PF01783">
    <property type="entry name" value="Ribosomal_L32p"/>
    <property type="match status" value="1"/>
</dbReference>
<dbReference type="SUPFAM" id="SSF57829">
    <property type="entry name" value="Zn-binding ribosomal proteins"/>
    <property type="match status" value="1"/>
</dbReference>
<reference key="1">
    <citation type="journal article" date="1999" name="Biotechnol. Lett.">
        <title>Cloning and sequencing of clustered genes involved in fatty acid biosynthesis from the docosahexaenoic acid-producing bacterium, Vibrio marinus strain MP-1.</title>
        <authorList>
            <person name="Morita N."/>
            <person name="Ueno A."/>
            <person name="Tanaka M."/>
            <person name="Ohgiya S."/>
            <person name="Hoshino T."/>
            <person name="Kawasaki K."/>
            <person name="Yumoto I."/>
            <person name="Ishizaki K."/>
            <person name="Okuyama H."/>
        </authorList>
    </citation>
    <scope>NUCLEOTIDE SEQUENCE [GENOMIC DNA]</scope>
    <source>
        <strain>ATCC 15381 / BCRC 15891 / CIP 102861 / NCIMB 1144 / MP-1</strain>
    </source>
</reference>
<evidence type="ECO:0000250" key="1"/>
<evidence type="ECO:0000256" key="2">
    <source>
        <dbReference type="SAM" id="MobiDB-lite"/>
    </source>
</evidence>
<evidence type="ECO:0000305" key="3"/>
<organism>
    <name type="scientific">Moritella marina</name>
    <name type="common">Vibrio marinus</name>
    <dbReference type="NCBI Taxonomy" id="90736"/>
    <lineage>
        <taxon>Bacteria</taxon>
        <taxon>Pseudomonadati</taxon>
        <taxon>Pseudomonadota</taxon>
        <taxon>Gammaproteobacteria</taxon>
        <taxon>Alteromonadales</taxon>
        <taxon>Moritellaceae</taxon>
        <taxon>Moritella</taxon>
    </lineage>
</organism>
<gene>
    <name type="primary">rpmF</name>
</gene>
<protein>
    <recommendedName>
        <fullName evidence="3">Large ribosomal subunit protein bL32</fullName>
    </recommendedName>
    <alternativeName>
        <fullName>50S ribosomal protein L32</fullName>
    </alternativeName>
</protein>